<reference key="1">
    <citation type="submission" date="2005-06" db="EMBL/GenBank/DDBJ databases">
        <title>DNA sequences of macaque genes expressed in brain or testis and its evolutionary implications.</title>
        <authorList>
            <consortium name="International consortium for macaque cDNA sequencing and analysis"/>
        </authorList>
    </citation>
    <scope>NUCLEOTIDE SEQUENCE [LARGE SCALE MRNA]</scope>
    <source>
        <tissue>Testis</tissue>
    </source>
</reference>
<evidence type="ECO:0000250" key="1">
    <source>
        <dbReference type="UniProtKB" id="Q8CDK3"/>
    </source>
</evidence>
<evidence type="ECO:0000250" key="2">
    <source>
        <dbReference type="UniProtKB" id="Q8NA54"/>
    </source>
</evidence>
<evidence type="ECO:0000255" key="3">
    <source>
        <dbReference type="PROSITE-ProRule" id="PRU00214"/>
    </source>
</evidence>
<evidence type="ECO:0000256" key="4">
    <source>
        <dbReference type="SAM" id="MobiDB-lite"/>
    </source>
</evidence>
<evidence type="ECO:0000305" key="5"/>
<name>IQUB_MACFA</name>
<accession>Q4R6T7</accession>
<accession>Q4R6Q1</accession>
<keyword id="KW-0966">Cell projection</keyword>
<keyword id="KW-0969">Cilium</keyword>
<keyword id="KW-0970">Cilium biogenesis/degradation</keyword>
<keyword id="KW-0963">Cytoplasm</keyword>
<keyword id="KW-0206">Cytoskeleton</keyword>
<keyword id="KW-0282">Flagellum</keyword>
<keyword id="KW-1185">Reference proteome</keyword>
<feature type="chain" id="PRO_0000274602" description="IQ motif and ubiquitin-like domain-containing protein">
    <location>
        <begin position="1"/>
        <end position="790"/>
    </location>
</feature>
<feature type="domain" description="Ubiquitin-like" evidence="3">
    <location>
        <begin position="130"/>
        <end position="206"/>
    </location>
</feature>
<feature type="domain" description="IQ">
    <location>
        <begin position="337"/>
        <end position="366"/>
    </location>
</feature>
<feature type="region of interest" description="Disordered" evidence="4">
    <location>
        <begin position="1"/>
        <end position="49"/>
    </location>
</feature>
<feature type="compositionally biased region" description="Polar residues" evidence="4">
    <location>
        <begin position="1"/>
        <end position="17"/>
    </location>
</feature>
<feature type="sequence conflict" description="In Ref. 1; BAE01187." evidence="5" ref="1">
    <original>Y</original>
    <variation>C</variation>
    <location>
        <position position="327"/>
    </location>
</feature>
<feature type="sequence conflict" description="In Ref. 1; BAE01187." evidence="5" ref="1">
    <original>F</original>
    <variation>S</variation>
    <location>
        <position position="402"/>
    </location>
</feature>
<organism>
    <name type="scientific">Macaca fascicularis</name>
    <name type="common">Crab-eating macaque</name>
    <name type="synonym">Cynomolgus monkey</name>
    <dbReference type="NCBI Taxonomy" id="9541"/>
    <lineage>
        <taxon>Eukaryota</taxon>
        <taxon>Metazoa</taxon>
        <taxon>Chordata</taxon>
        <taxon>Craniata</taxon>
        <taxon>Vertebrata</taxon>
        <taxon>Euteleostomi</taxon>
        <taxon>Mammalia</taxon>
        <taxon>Eutheria</taxon>
        <taxon>Euarchontoglires</taxon>
        <taxon>Primates</taxon>
        <taxon>Haplorrhini</taxon>
        <taxon>Catarrhini</taxon>
        <taxon>Cercopithecidae</taxon>
        <taxon>Cercopithecinae</taxon>
        <taxon>Macaca</taxon>
    </lineage>
</organism>
<dbReference type="EMBL" id="AB169129">
    <property type="protein sequence ID" value="BAE01223.1"/>
    <property type="status" value="ALT_INIT"/>
    <property type="molecule type" value="mRNA"/>
</dbReference>
<dbReference type="EMBL" id="AB169093">
    <property type="protein sequence ID" value="BAE01187.1"/>
    <property type="molecule type" value="mRNA"/>
</dbReference>
<dbReference type="RefSeq" id="NP_001270025.1">
    <property type="nucleotide sequence ID" value="NM_001283096.1"/>
</dbReference>
<dbReference type="RefSeq" id="XP_045244404.2">
    <property type="nucleotide sequence ID" value="XM_045388469.2"/>
</dbReference>
<dbReference type="SMR" id="Q4R6T7"/>
<dbReference type="STRING" id="9541.ENSMFAP00000038347"/>
<dbReference type="GeneID" id="101926148"/>
<dbReference type="eggNOG" id="ENOG502QRQT">
    <property type="taxonomic scope" value="Eukaryota"/>
</dbReference>
<dbReference type="Proteomes" id="UP000233100">
    <property type="component" value="Unplaced"/>
</dbReference>
<dbReference type="GO" id="GO:0097729">
    <property type="term" value="C:9+2 motile cilium"/>
    <property type="evidence" value="ECO:0000250"/>
    <property type="project" value="UniProtKB"/>
</dbReference>
<dbReference type="GO" id="GO:0001669">
    <property type="term" value="C:acrosomal vesicle"/>
    <property type="evidence" value="ECO:0007669"/>
    <property type="project" value="TreeGrafter"/>
</dbReference>
<dbReference type="GO" id="GO:0001534">
    <property type="term" value="C:radial spoke"/>
    <property type="evidence" value="ECO:0000250"/>
    <property type="project" value="UniProtKB"/>
</dbReference>
<dbReference type="GO" id="GO:0036126">
    <property type="term" value="C:sperm flagellum"/>
    <property type="evidence" value="ECO:0000250"/>
    <property type="project" value="UniProtKB"/>
</dbReference>
<dbReference type="GO" id="GO:0060271">
    <property type="term" value="P:cilium assembly"/>
    <property type="evidence" value="ECO:0007669"/>
    <property type="project" value="TreeGrafter"/>
</dbReference>
<dbReference type="GO" id="GO:0030317">
    <property type="term" value="P:flagellated sperm motility"/>
    <property type="evidence" value="ECO:0000250"/>
    <property type="project" value="UniProtKB"/>
</dbReference>
<dbReference type="GO" id="GO:0007618">
    <property type="term" value="P:mating"/>
    <property type="evidence" value="ECO:0000250"/>
    <property type="project" value="UniProtKB"/>
</dbReference>
<dbReference type="CDD" id="cd17061">
    <property type="entry name" value="Ubl_IQUB"/>
    <property type="match status" value="1"/>
</dbReference>
<dbReference type="Gene3D" id="3.10.20.90">
    <property type="entry name" value="Phosphatidylinositol 3-kinase Catalytic Subunit, Chain A, domain 1"/>
    <property type="match status" value="1"/>
</dbReference>
<dbReference type="InterPro" id="IPR037695">
    <property type="entry name" value="IQUB"/>
</dbReference>
<dbReference type="InterPro" id="IPR000626">
    <property type="entry name" value="Ubiquitin-like_dom"/>
</dbReference>
<dbReference type="InterPro" id="IPR029071">
    <property type="entry name" value="Ubiquitin-like_domsf"/>
</dbReference>
<dbReference type="PANTHER" id="PTHR21074">
    <property type="entry name" value="IQ AND UBIQUITIN-LIKE DOMAIN-CONTAINING PROTEIN"/>
    <property type="match status" value="1"/>
</dbReference>
<dbReference type="PANTHER" id="PTHR21074:SF0">
    <property type="entry name" value="IQ AND UBIQUITIN-LIKE DOMAIN-CONTAINING PROTEIN"/>
    <property type="match status" value="1"/>
</dbReference>
<dbReference type="Pfam" id="PF00240">
    <property type="entry name" value="ubiquitin"/>
    <property type="match status" value="1"/>
</dbReference>
<dbReference type="SUPFAM" id="SSF54236">
    <property type="entry name" value="Ubiquitin-like"/>
    <property type="match status" value="1"/>
</dbReference>
<dbReference type="PROSITE" id="PS50053">
    <property type="entry name" value="UBIQUITIN_2"/>
    <property type="match status" value="1"/>
</dbReference>
<sequence>MSNQPKKYETQNIANSTEESDAFDIVTIPVPSEEPQESDQTEEHESGIEQFSESHAIHVEEQSDRSFSSLEPDSEQLMKEVISPRQVSYTPQHHEKQYAMQSPNDDSLAFLDKIKAIKESLQESMEDSLATVKVVLIPVGQEIVISFKVDTVLKYLKDYFSHLLGIPLSVLQIRYSGKILRNNETLVQHGVKPQEIIQVEIFSTNPDLYPVKRIDGLTDVSQIITVTVQTGLDRYQQVAVEIVKSDFHKPFLGGFRHKVTGVEYHHAGTQTVPKKIPERLSVFCRDTQTVFQKKNLQQTTNTTSTQMTNIGVYVSNMTDKLVTPGKYFSAAEYHAQRLKAVIVIQTYYRQWHAKIFVEDLRRQKSLRLEWETQQELRKIREKEEWVKLDYHRRHNPKTSEDFEFLYNALEFWRQEELKRINQSFTGAERKAALCELLEKETQIIASIGRHRYIAYTANQEAAIQAFLDKCSAPKIWRTPNGKTIEMDTQFTIRARELQNIYKCIMLKNISQDERLDVLLTLKHTVKEHECKLTQEILELIDREVDLMMRGVKHHNLEGLRKRIATLFFHYIKTPLFNPEVAKYLKVPQDPLKFYKKIYFCHSCQLYLPSTEFSISSTSRRIYRCRNCISLENEAQKRESFLKYRCLLQQLYFTEADYEDDSKIAFLMQLQDIQYLTENIWASQSVLSAWDDLSDLVMVRWNKSLEWSPWNCILLTKDEAAAHLNLTSIEEGYERSFIHKIKHKHILAKNYFSQIPVLASFILDDPEIDEIRWKHHSDTTPKIIESQRPPP</sequence>
<proteinExistence type="evidence at transcript level"/>
<protein>
    <recommendedName>
        <fullName>IQ motif and ubiquitin-like domain-containing protein</fullName>
    </recommendedName>
</protein>
<gene>
    <name type="primary">IQUB</name>
    <name type="ORF">QtsA-17155</name>
    <name type="ORF">QtsA-17428</name>
</gene>
<comment type="function">
    <text evidence="1">Adapter protein that anchors the radial spoke 1 (RS1) complex to the A microtubule of outer doublet microtubules in axonemes. The triple radial spokes (RS1, RS2 and RS3) are required to modulate beating of the sperm flagellum. May play a role in inhibiting signaling via MAPK1/ERK2 and MAPK3/ERK1. Additionally, may play a role in the functioning of cilia. Not required for the functioning of tracheal or ependymal cilia.</text>
</comment>
<comment type="subunit">
    <text evidence="1 2">Component of the axonemal radial spoke 1 (RS1) complex, at least composed of spoke head proteins RSPH1, RSPH3, RSPH9 and the cilia-specific component RSPH4A or sperm-specific component RSPH6A, spoke stalk proteins RSPH14, DNAJB13, DYDC1, ROPN1L and NME5, and the anchor protein IQUB. Does not appear to be part of radial spoke complexes 2 or 3 (RS2 or RS3). Interacts with CALM1. Interacts with DNAJB13. Interacts with DYNLL2. Interacts with NME5 (By similarity). Interacts with RSPH3 (By similarity). Interacts with RSPH9 (By similarity). Interacts with ZMYND10. Interacts with calmodulin; the interaction occurs in conditions of low but not high calcium (By similarity).</text>
</comment>
<comment type="subcellular location">
    <subcellularLocation>
        <location evidence="1">Cytoplasm</location>
        <location evidence="1">Cytoskeleton</location>
        <location evidence="1">Flagellum axoneme</location>
    </subcellularLocation>
    <subcellularLocation>
        <location evidence="1">Cell projection</location>
        <location evidence="1">Cilium</location>
    </subcellularLocation>
    <text evidence="1">Localizes to the axoneme of sperm cells and the cilia of tracheal epithelial cells.</text>
</comment>
<comment type="sequence caution" evidence="5">
    <conflict type="erroneous initiation">
        <sequence resource="EMBL-CDS" id="BAE01223"/>
    </conflict>
</comment>